<organism>
    <name type="scientific">Mycobacterium bovis (strain ATCC BAA-935 / AF2122/97)</name>
    <dbReference type="NCBI Taxonomy" id="233413"/>
    <lineage>
        <taxon>Bacteria</taxon>
        <taxon>Bacillati</taxon>
        <taxon>Actinomycetota</taxon>
        <taxon>Actinomycetes</taxon>
        <taxon>Mycobacteriales</taxon>
        <taxon>Mycobacteriaceae</taxon>
        <taxon>Mycobacterium</taxon>
        <taxon>Mycobacterium tuberculosis complex</taxon>
    </lineage>
</organism>
<keyword id="KW-0067">ATP-binding</keyword>
<keyword id="KW-0227">DNA damage</keyword>
<keyword id="KW-0234">DNA repair</keyword>
<keyword id="KW-0238">DNA-binding</keyword>
<keyword id="KW-0347">Helicase</keyword>
<keyword id="KW-0378">Hydrolase</keyword>
<keyword id="KW-0413">Isomerase</keyword>
<keyword id="KW-0547">Nucleotide-binding</keyword>
<keyword id="KW-1185">Reference proteome</keyword>
<sequence>MSVHATDAKPPGPSPADQLLDGLNPQQRQAVVHEGSPLLIVAGAGSGKTAVLTRRIAYLMAARGVGVGQILAITFTNKAAAEMRERVVGLVGEKARYMWVSTFHSTCVRILRNQAALIEGLNSNFSIYDADDSRRLLQMVGRDLGLDIKRYSPRLLANAISNLKNELIDPHQALAGLTEDSDDLARAVASVYDEYQRRLRAANALDFDDLIGETVAVLQAFPQIAQYYRRRFRHVLVDEYQDTNHAQYVLVRELVGRDSNDGIPPGELCVVGDADQSIYAFRGATIRNIEDFERDYPDTRTILLEQNYRSTQNILSAANSVIARNAGRREKRLWTDAGAGELIVGYVADNEHDEARFVAEEIDALAEGSEITYNDVAVFYRTNNSSRSLEEVLIRAGIPYKVVGGVRFYERKEIRDIVAYLRVLDNPGDAVSLRRILNTPRRGIGDRAEACVAVYAENTGVGFGDALVAAAQGKVPMLNTRAEKAIAGFVEMFDELRGRLDDDLGELVEAVLERTGYRRELEASTDPQELARLDNLNELVSVAHEFSTDRENAAALGPDDEDVPDTGVLADFLERVSLVADADEIPEHGAGVVTLMTLHTAKGLEFPVVFVTGWEDGMFPHMRALDNPTELSEERRLAYVGITRARQRLYVSRAIVRSSWGQPMLNPESRFLREIPQELIDWRRTAPKPSFSAPVSGAGRFGSARPSPTRSGASRRPLLVLQVGDRVTHDKYGLGRVEEVSGVGESAMSLIDFGSSGRVKLMHNHAPVTKL</sequence>
<comment type="function">
    <text evidence="1">DNA-dependent ATPase, acting on dsDNA with a 3'-ssDNA tail, unwinding with 3'-to 5'-polarity. Also highly efficient on nicked DNA. Involved in the post-incision events of nucleotide excision repair (By similarity).</text>
</comment>
<comment type="catalytic activity">
    <reaction>
        <text>Couples ATP hydrolysis with the unwinding of duplex DNA by translocating in the 3'-5' direction.</text>
        <dbReference type="EC" id="5.6.2.4"/>
    </reaction>
</comment>
<comment type="catalytic activity">
    <reaction>
        <text>ATP + H2O = ADP + phosphate + H(+)</text>
        <dbReference type="Rhea" id="RHEA:13065"/>
        <dbReference type="ChEBI" id="CHEBI:15377"/>
        <dbReference type="ChEBI" id="CHEBI:15378"/>
        <dbReference type="ChEBI" id="CHEBI:30616"/>
        <dbReference type="ChEBI" id="CHEBI:43474"/>
        <dbReference type="ChEBI" id="CHEBI:456216"/>
        <dbReference type="EC" id="5.6.2.4"/>
    </reaction>
</comment>
<comment type="cofactor">
    <cofactor evidence="1">
        <name>Mg(2+)</name>
        <dbReference type="ChEBI" id="CHEBI:18420"/>
    </cofactor>
</comment>
<comment type="subunit">
    <text evidence="1">Monomer.</text>
</comment>
<comment type="similarity">
    <text evidence="5">Belongs to the helicase family. UvrD subfamily.</text>
</comment>
<protein>
    <recommendedName>
        <fullName>ATP-dependent DNA helicase UvrD1</fullName>
        <ecNumber>5.6.2.4</ecNumber>
    </recommendedName>
    <alternativeName>
        <fullName evidence="5">DNA 3'-5' helicase UvrD1</fullName>
    </alternativeName>
</protein>
<accession>P0A5A4</accession>
<accession>A0A1R3XZ05</accession>
<accession>P71561</accession>
<accession>X2BGI2</accession>
<proteinExistence type="inferred from homology"/>
<evidence type="ECO:0000250" key="1"/>
<evidence type="ECO:0000255" key="2">
    <source>
        <dbReference type="PROSITE-ProRule" id="PRU00560"/>
    </source>
</evidence>
<evidence type="ECO:0000255" key="3">
    <source>
        <dbReference type="PROSITE-ProRule" id="PRU00617"/>
    </source>
</evidence>
<evidence type="ECO:0000256" key="4">
    <source>
        <dbReference type="SAM" id="MobiDB-lite"/>
    </source>
</evidence>
<evidence type="ECO:0000305" key="5"/>
<name>UVRD1_MYCBO</name>
<feature type="chain" id="PRO_0000102053" description="ATP-dependent DNA helicase UvrD1">
    <location>
        <begin position="1"/>
        <end position="771"/>
    </location>
</feature>
<feature type="domain" description="UvrD-like helicase ATP-binding" evidence="2">
    <location>
        <begin position="21"/>
        <end position="311"/>
    </location>
</feature>
<feature type="domain" description="UvrD-like helicase C-terminal" evidence="3">
    <location>
        <begin position="312"/>
        <end position="603"/>
    </location>
</feature>
<feature type="region of interest" description="Disordered" evidence="4">
    <location>
        <begin position="1"/>
        <end position="21"/>
    </location>
</feature>
<feature type="region of interest" description="Disordered" evidence="4">
    <location>
        <begin position="691"/>
        <end position="716"/>
    </location>
</feature>
<feature type="binding site" evidence="2">
    <location>
        <begin position="45"/>
        <end position="50"/>
    </location>
    <ligand>
        <name>ATP</name>
        <dbReference type="ChEBI" id="CHEBI:30616"/>
    </ligand>
</feature>
<feature type="binding site" evidence="1">
    <location>
        <position position="309"/>
    </location>
    <ligand>
        <name>ATP</name>
        <dbReference type="ChEBI" id="CHEBI:30616"/>
    </ligand>
</feature>
<gene>
    <name type="primary">uvrD1</name>
    <name type="synonym">ivrD</name>
    <name type="ordered locus">BQ2027_MB0974</name>
</gene>
<reference key="1">
    <citation type="journal article" date="2003" name="Proc. Natl. Acad. Sci. U.S.A.">
        <title>The complete genome sequence of Mycobacterium bovis.</title>
        <authorList>
            <person name="Garnier T."/>
            <person name="Eiglmeier K."/>
            <person name="Camus J.-C."/>
            <person name="Medina N."/>
            <person name="Mansoor H."/>
            <person name="Pryor M."/>
            <person name="Duthoy S."/>
            <person name="Grondin S."/>
            <person name="Lacroix C."/>
            <person name="Monsempe C."/>
            <person name="Simon S."/>
            <person name="Harris B."/>
            <person name="Atkin R."/>
            <person name="Doggett J."/>
            <person name="Mayes R."/>
            <person name="Keating L."/>
            <person name="Wheeler P.R."/>
            <person name="Parkhill J."/>
            <person name="Barrell B.G."/>
            <person name="Cole S.T."/>
            <person name="Gordon S.V."/>
            <person name="Hewinson R.G."/>
        </authorList>
    </citation>
    <scope>NUCLEOTIDE SEQUENCE [LARGE SCALE GENOMIC DNA]</scope>
    <source>
        <strain>ATCC BAA-935 / AF2122/97</strain>
    </source>
</reference>
<reference key="2">
    <citation type="journal article" date="2017" name="Genome Announc.">
        <title>Updated reference genome sequence and annotation of Mycobacterium bovis AF2122/97.</title>
        <authorList>
            <person name="Malone K.M."/>
            <person name="Farrell D."/>
            <person name="Stuber T.P."/>
            <person name="Schubert O.T."/>
            <person name="Aebersold R."/>
            <person name="Robbe-Austerman S."/>
            <person name="Gordon S.V."/>
        </authorList>
    </citation>
    <scope>NUCLEOTIDE SEQUENCE [LARGE SCALE GENOMIC DNA]</scope>
    <scope>GENOME REANNOTATION</scope>
    <source>
        <strain>ATCC BAA-935 / AF2122/97</strain>
    </source>
</reference>
<dbReference type="EC" id="5.6.2.4"/>
<dbReference type="EMBL" id="LT708304">
    <property type="protein sequence ID" value="SIT99572.1"/>
    <property type="molecule type" value="Genomic_DNA"/>
</dbReference>
<dbReference type="RefSeq" id="NP_854631.1">
    <property type="nucleotide sequence ID" value="NC_002945.3"/>
</dbReference>
<dbReference type="SMR" id="P0A5A4"/>
<dbReference type="KEGG" id="mbo:BQ2027_MB0974"/>
<dbReference type="PATRIC" id="fig|233413.5.peg.1060"/>
<dbReference type="Proteomes" id="UP000001419">
    <property type="component" value="Chromosome"/>
</dbReference>
<dbReference type="GO" id="GO:0005829">
    <property type="term" value="C:cytosol"/>
    <property type="evidence" value="ECO:0007669"/>
    <property type="project" value="TreeGrafter"/>
</dbReference>
<dbReference type="GO" id="GO:0033202">
    <property type="term" value="C:DNA helicase complex"/>
    <property type="evidence" value="ECO:0007669"/>
    <property type="project" value="TreeGrafter"/>
</dbReference>
<dbReference type="GO" id="GO:0043138">
    <property type="term" value="F:3'-5' DNA helicase activity"/>
    <property type="evidence" value="ECO:0007669"/>
    <property type="project" value="TreeGrafter"/>
</dbReference>
<dbReference type="GO" id="GO:0005524">
    <property type="term" value="F:ATP binding"/>
    <property type="evidence" value="ECO:0007669"/>
    <property type="project" value="UniProtKB-KW"/>
</dbReference>
<dbReference type="GO" id="GO:0016887">
    <property type="term" value="F:ATP hydrolysis activity"/>
    <property type="evidence" value="ECO:0007669"/>
    <property type="project" value="RHEA"/>
</dbReference>
<dbReference type="GO" id="GO:0003677">
    <property type="term" value="F:DNA binding"/>
    <property type="evidence" value="ECO:0007669"/>
    <property type="project" value="UniProtKB-KW"/>
</dbReference>
<dbReference type="GO" id="GO:0006260">
    <property type="term" value="P:DNA replication"/>
    <property type="evidence" value="ECO:0007669"/>
    <property type="project" value="InterPro"/>
</dbReference>
<dbReference type="GO" id="GO:0000725">
    <property type="term" value="P:recombinational repair"/>
    <property type="evidence" value="ECO:0007669"/>
    <property type="project" value="TreeGrafter"/>
</dbReference>
<dbReference type="CDD" id="cd17932">
    <property type="entry name" value="DEXQc_UvrD"/>
    <property type="match status" value="1"/>
</dbReference>
<dbReference type="CDD" id="cd18807">
    <property type="entry name" value="SF1_C_UvrD"/>
    <property type="match status" value="1"/>
</dbReference>
<dbReference type="FunFam" id="1.10.10.160:FF:000001">
    <property type="entry name" value="ATP-dependent DNA helicase"/>
    <property type="match status" value="1"/>
</dbReference>
<dbReference type="FunFam" id="1.10.486.10:FF:000003">
    <property type="entry name" value="ATP-dependent DNA helicase"/>
    <property type="match status" value="1"/>
</dbReference>
<dbReference type="Gene3D" id="1.10.10.160">
    <property type="match status" value="1"/>
</dbReference>
<dbReference type="Gene3D" id="3.40.50.300">
    <property type="entry name" value="P-loop containing nucleotide triphosphate hydrolases"/>
    <property type="match status" value="2"/>
</dbReference>
<dbReference type="Gene3D" id="1.10.486.10">
    <property type="entry name" value="PCRA, domain 4"/>
    <property type="match status" value="1"/>
</dbReference>
<dbReference type="InterPro" id="IPR005751">
    <property type="entry name" value="ATP-dep_DNA_helicase_PcrA"/>
</dbReference>
<dbReference type="InterPro" id="IPR013986">
    <property type="entry name" value="DExx_box_DNA_helicase_dom_sf"/>
</dbReference>
<dbReference type="InterPro" id="IPR014017">
    <property type="entry name" value="DNA_helicase_UvrD-like_C"/>
</dbReference>
<dbReference type="InterPro" id="IPR000212">
    <property type="entry name" value="DNA_helicase_UvrD/REP"/>
</dbReference>
<dbReference type="InterPro" id="IPR027417">
    <property type="entry name" value="P-loop_NTPase"/>
</dbReference>
<dbReference type="InterPro" id="IPR014016">
    <property type="entry name" value="UvrD-like_ATP-bd"/>
</dbReference>
<dbReference type="NCBIfam" id="TIGR01073">
    <property type="entry name" value="pcrA"/>
    <property type="match status" value="1"/>
</dbReference>
<dbReference type="PANTHER" id="PTHR11070:SF2">
    <property type="entry name" value="ATP-DEPENDENT DNA HELICASE SRS2"/>
    <property type="match status" value="1"/>
</dbReference>
<dbReference type="PANTHER" id="PTHR11070">
    <property type="entry name" value="UVRD / RECB / PCRA DNA HELICASE FAMILY MEMBER"/>
    <property type="match status" value="1"/>
</dbReference>
<dbReference type="Pfam" id="PF21196">
    <property type="entry name" value="PcrA_UvrD_tudor"/>
    <property type="match status" value="1"/>
</dbReference>
<dbReference type="Pfam" id="PF00580">
    <property type="entry name" value="UvrD-helicase"/>
    <property type="match status" value="1"/>
</dbReference>
<dbReference type="Pfam" id="PF13361">
    <property type="entry name" value="UvrD_C"/>
    <property type="match status" value="1"/>
</dbReference>
<dbReference type="SUPFAM" id="SSF52540">
    <property type="entry name" value="P-loop containing nucleoside triphosphate hydrolases"/>
    <property type="match status" value="1"/>
</dbReference>
<dbReference type="PROSITE" id="PS51198">
    <property type="entry name" value="UVRD_HELICASE_ATP_BIND"/>
    <property type="match status" value="1"/>
</dbReference>
<dbReference type="PROSITE" id="PS51217">
    <property type="entry name" value="UVRD_HELICASE_CTER"/>
    <property type="match status" value="1"/>
</dbReference>